<feature type="chain" id="PRO_0000256119" description="ATP synthase subunit alpha">
    <location>
        <begin position="1"/>
        <end position="513"/>
    </location>
</feature>
<feature type="binding site" evidence="1">
    <location>
        <begin position="169"/>
        <end position="176"/>
    </location>
    <ligand>
        <name>ATP</name>
        <dbReference type="ChEBI" id="CHEBI:30616"/>
    </ligand>
</feature>
<feature type="site" description="Required for activity" evidence="1">
    <location>
        <position position="373"/>
    </location>
</feature>
<protein>
    <recommendedName>
        <fullName evidence="1">ATP synthase subunit alpha</fullName>
        <ecNumber evidence="1">7.1.2.2</ecNumber>
    </recommendedName>
    <alternativeName>
        <fullName evidence="1">ATP synthase F1 sector subunit alpha</fullName>
    </alternativeName>
    <alternativeName>
        <fullName evidence="1">F-ATPase subunit alpha</fullName>
    </alternativeName>
</protein>
<comment type="function">
    <text evidence="1">Produces ATP from ADP in the presence of a proton gradient across the membrane. The alpha chain is a regulatory subunit.</text>
</comment>
<comment type="catalytic activity">
    <reaction evidence="1">
        <text>ATP + H2O + 4 H(+)(in) = ADP + phosphate + 5 H(+)(out)</text>
        <dbReference type="Rhea" id="RHEA:57720"/>
        <dbReference type="ChEBI" id="CHEBI:15377"/>
        <dbReference type="ChEBI" id="CHEBI:15378"/>
        <dbReference type="ChEBI" id="CHEBI:30616"/>
        <dbReference type="ChEBI" id="CHEBI:43474"/>
        <dbReference type="ChEBI" id="CHEBI:456216"/>
        <dbReference type="EC" id="7.1.2.2"/>
    </reaction>
</comment>
<comment type="subunit">
    <text evidence="1">F-type ATPases have 2 components, CF(1) - the catalytic core - and CF(0) - the membrane proton channel. CF(1) has five subunits: alpha(3), beta(3), gamma(1), delta(1), epsilon(1). CF(0) has three main subunits: a(1), b(2) and c(9-12). The alpha and beta chains form an alternating ring which encloses part of the gamma chain. CF(1) is attached to CF(0) by a central stalk formed by the gamma and epsilon chains, while a peripheral stalk is formed by the delta and b chains.</text>
</comment>
<comment type="subcellular location">
    <subcellularLocation>
        <location evidence="1">Cell inner membrane</location>
        <topology evidence="1">Peripheral membrane protein</topology>
    </subcellularLocation>
</comment>
<comment type="similarity">
    <text evidence="1">Belongs to the ATPase alpha/beta chains family.</text>
</comment>
<reference key="1">
    <citation type="journal article" date="2006" name="J. Bacteriol.">
        <title>Complete genome sequence of Yersinia pestis strains Antiqua and Nepal516: evidence of gene reduction in an emerging pathogen.</title>
        <authorList>
            <person name="Chain P.S.G."/>
            <person name="Hu P."/>
            <person name="Malfatti S.A."/>
            <person name="Radnedge L."/>
            <person name="Larimer F."/>
            <person name="Vergez L.M."/>
            <person name="Worsham P."/>
            <person name="Chu M.C."/>
            <person name="Andersen G.L."/>
        </authorList>
    </citation>
    <scope>NUCLEOTIDE SEQUENCE [LARGE SCALE GENOMIC DNA]</scope>
    <source>
        <strain>Antiqua</strain>
    </source>
</reference>
<gene>
    <name evidence="1" type="primary">atpA</name>
    <name type="ordered locus">YPA_4168</name>
</gene>
<organism>
    <name type="scientific">Yersinia pestis bv. Antiqua (strain Antiqua)</name>
    <dbReference type="NCBI Taxonomy" id="360102"/>
    <lineage>
        <taxon>Bacteria</taxon>
        <taxon>Pseudomonadati</taxon>
        <taxon>Pseudomonadota</taxon>
        <taxon>Gammaproteobacteria</taxon>
        <taxon>Enterobacterales</taxon>
        <taxon>Yersiniaceae</taxon>
        <taxon>Yersinia</taxon>
    </lineage>
</organism>
<dbReference type="EC" id="7.1.2.2" evidence="1"/>
<dbReference type="EMBL" id="CP000308">
    <property type="protein sequence ID" value="ABG16129.1"/>
    <property type="molecule type" value="Genomic_DNA"/>
</dbReference>
<dbReference type="RefSeq" id="WP_002220758.1">
    <property type="nucleotide sequence ID" value="NZ_CP009906.1"/>
</dbReference>
<dbReference type="SMR" id="Q1C093"/>
<dbReference type="GeneID" id="96663461"/>
<dbReference type="KEGG" id="ypa:YPA_4168"/>
<dbReference type="Proteomes" id="UP000001971">
    <property type="component" value="Chromosome"/>
</dbReference>
<dbReference type="GO" id="GO:0005886">
    <property type="term" value="C:plasma membrane"/>
    <property type="evidence" value="ECO:0007669"/>
    <property type="project" value="UniProtKB-SubCell"/>
</dbReference>
<dbReference type="GO" id="GO:0045259">
    <property type="term" value="C:proton-transporting ATP synthase complex"/>
    <property type="evidence" value="ECO:0007669"/>
    <property type="project" value="UniProtKB-KW"/>
</dbReference>
<dbReference type="GO" id="GO:0043531">
    <property type="term" value="F:ADP binding"/>
    <property type="evidence" value="ECO:0007669"/>
    <property type="project" value="TreeGrafter"/>
</dbReference>
<dbReference type="GO" id="GO:0005524">
    <property type="term" value="F:ATP binding"/>
    <property type="evidence" value="ECO:0007669"/>
    <property type="project" value="UniProtKB-UniRule"/>
</dbReference>
<dbReference type="GO" id="GO:0046933">
    <property type="term" value="F:proton-transporting ATP synthase activity, rotational mechanism"/>
    <property type="evidence" value="ECO:0007669"/>
    <property type="project" value="UniProtKB-UniRule"/>
</dbReference>
<dbReference type="CDD" id="cd18113">
    <property type="entry name" value="ATP-synt_F1_alpha_C"/>
    <property type="match status" value="1"/>
</dbReference>
<dbReference type="CDD" id="cd18116">
    <property type="entry name" value="ATP-synt_F1_alpha_N"/>
    <property type="match status" value="1"/>
</dbReference>
<dbReference type="CDD" id="cd01132">
    <property type="entry name" value="F1-ATPase_alpha_CD"/>
    <property type="match status" value="1"/>
</dbReference>
<dbReference type="FunFam" id="1.20.150.20:FF:000001">
    <property type="entry name" value="ATP synthase subunit alpha"/>
    <property type="match status" value="1"/>
</dbReference>
<dbReference type="FunFam" id="2.40.30.20:FF:000001">
    <property type="entry name" value="ATP synthase subunit alpha"/>
    <property type="match status" value="1"/>
</dbReference>
<dbReference type="FunFam" id="3.40.50.300:FF:000002">
    <property type="entry name" value="ATP synthase subunit alpha"/>
    <property type="match status" value="1"/>
</dbReference>
<dbReference type="Gene3D" id="2.40.30.20">
    <property type="match status" value="1"/>
</dbReference>
<dbReference type="Gene3D" id="1.20.150.20">
    <property type="entry name" value="ATP synthase alpha/beta chain, C-terminal domain"/>
    <property type="match status" value="1"/>
</dbReference>
<dbReference type="Gene3D" id="3.40.50.300">
    <property type="entry name" value="P-loop containing nucleotide triphosphate hydrolases"/>
    <property type="match status" value="1"/>
</dbReference>
<dbReference type="HAMAP" id="MF_01346">
    <property type="entry name" value="ATP_synth_alpha_bact"/>
    <property type="match status" value="1"/>
</dbReference>
<dbReference type="InterPro" id="IPR023366">
    <property type="entry name" value="ATP_synth_asu-like_sf"/>
</dbReference>
<dbReference type="InterPro" id="IPR000793">
    <property type="entry name" value="ATP_synth_asu_C"/>
</dbReference>
<dbReference type="InterPro" id="IPR038376">
    <property type="entry name" value="ATP_synth_asu_C_sf"/>
</dbReference>
<dbReference type="InterPro" id="IPR033732">
    <property type="entry name" value="ATP_synth_F1_a_nt-bd_dom"/>
</dbReference>
<dbReference type="InterPro" id="IPR005294">
    <property type="entry name" value="ATP_synth_F1_asu"/>
</dbReference>
<dbReference type="InterPro" id="IPR020003">
    <property type="entry name" value="ATPase_a/bsu_AS"/>
</dbReference>
<dbReference type="InterPro" id="IPR004100">
    <property type="entry name" value="ATPase_F1/V1/A1_a/bsu_N"/>
</dbReference>
<dbReference type="InterPro" id="IPR036121">
    <property type="entry name" value="ATPase_F1/V1/A1_a/bsu_N_sf"/>
</dbReference>
<dbReference type="InterPro" id="IPR000194">
    <property type="entry name" value="ATPase_F1/V1/A1_a/bsu_nucl-bd"/>
</dbReference>
<dbReference type="InterPro" id="IPR027417">
    <property type="entry name" value="P-loop_NTPase"/>
</dbReference>
<dbReference type="NCBIfam" id="TIGR00962">
    <property type="entry name" value="atpA"/>
    <property type="match status" value="1"/>
</dbReference>
<dbReference type="NCBIfam" id="NF009884">
    <property type="entry name" value="PRK13343.1"/>
    <property type="match status" value="1"/>
</dbReference>
<dbReference type="PANTHER" id="PTHR48082">
    <property type="entry name" value="ATP SYNTHASE SUBUNIT ALPHA, MITOCHONDRIAL"/>
    <property type="match status" value="1"/>
</dbReference>
<dbReference type="PANTHER" id="PTHR48082:SF2">
    <property type="entry name" value="ATP SYNTHASE SUBUNIT ALPHA, MITOCHONDRIAL"/>
    <property type="match status" value="1"/>
</dbReference>
<dbReference type="Pfam" id="PF00006">
    <property type="entry name" value="ATP-synt_ab"/>
    <property type="match status" value="1"/>
</dbReference>
<dbReference type="Pfam" id="PF00306">
    <property type="entry name" value="ATP-synt_ab_C"/>
    <property type="match status" value="1"/>
</dbReference>
<dbReference type="Pfam" id="PF02874">
    <property type="entry name" value="ATP-synt_ab_N"/>
    <property type="match status" value="1"/>
</dbReference>
<dbReference type="SUPFAM" id="SSF47917">
    <property type="entry name" value="C-terminal domain of alpha and beta subunits of F1 ATP synthase"/>
    <property type="match status" value="1"/>
</dbReference>
<dbReference type="SUPFAM" id="SSF50615">
    <property type="entry name" value="N-terminal domain of alpha and beta subunits of F1 ATP synthase"/>
    <property type="match status" value="1"/>
</dbReference>
<dbReference type="SUPFAM" id="SSF52540">
    <property type="entry name" value="P-loop containing nucleoside triphosphate hydrolases"/>
    <property type="match status" value="1"/>
</dbReference>
<dbReference type="PROSITE" id="PS00152">
    <property type="entry name" value="ATPASE_ALPHA_BETA"/>
    <property type="match status" value="1"/>
</dbReference>
<accession>Q1C093</accession>
<sequence>MQLNSTEISELIKQRIAQFNVVSEAHNEGTIVSVSDGIIRVHGLADVMQGEMIALPGNRYAIALNLERDSVGAVVMGPYADLAEGMKVKCTGRILEVPVGRGLLGRVVNTLGEPIDGKGSIENDGFSAVEAIAPGVIERQSVDEPVQTGYKSVDAMIPIGRGQRELIIGDRQTGKTALAIDAIINQRDSGIKCVYVAIGQKASTVANVVRKLEEHDALANTIVVVATASESAALQYLAPYSGCAMGEYFRDRGEDALIIYDDLSKQAVAYRQISLLLRRPPGREAYPGDVFYLHSRLLERAARVNAEYVEAFTKGEVKGKTGSLTALPIIETQAGDVSAFVPTNVISITDGQIFLESSLFNAGIRPAVNPGISVSRVGGAAQTKIMKKLSGGIRTALAQYRELAAFSQFASDLDDATRKQLSHGQKVTELLKQKQYAPMSVAQQSLVLFAAERGYLGDVELAKVGSFEAALLAFADREHAELLQQINQTGAYNDEIEAKLKGILDTFKATQSW</sequence>
<proteinExistence type="inferred from homology"/>
<keyword id="KW-0066">ATP synthesis</keyword>
<keyword id="KW-0067">ATP-binding</keyword>
<keyword id="KW-0997">Cell inner membrane</keyword>
<keyword id="KW-1003">Cell membrane</keyword>
<keyword id="KW-0139">CF(1)</keyword>
<keyword id="KW-0375">Hydrogen ion transport</keyword>
<keyword id="KW-0406">Ion transport</keyword>
<keyword id="KW-0472">Membrane</keyword>
<keyword id="KW-0547">Nucleotide-binding</keyword>
<keyword id="KW-1278">Translocase</keyword>
<keyword id="KW-0813">Transport</keyword>
<name>ATPA_YERPA</name>
<evidence type="ECO:0000255" key="1">
    <source>
        <dbReference type="HAMAP-Rule" id="MF_01346"/>
    </source>
</evidence>